<dbReference type="EC" id="6.3.4.20" evidence="1"/>
<dbReference type="EMBL" id="AP009324">
    <property type="protein sequence ID" value="BAF77592.1"/>
    <property type="molecule type" value="Genomic_DNA"/>
</dbReference>
<dbReference type="RefSeq" id="WP_000446724.1">
    <property type="nucleotide sequence ID" value="NZ_CTYB01000002.1"/>
</dbReference>
<dbReference type="SMR" id="A7WZJ4"/>
<dbReference type="KEGG" id="saw:SAHV_0709"/>
<dbReference type="HOGENOM" id="CLU_081854_0_0_9"/>
<dbReference type="UniPathway" id="UPA00391"/>
<dbReference type="GO" id="GO:0005524">
    <property type="term" value="F:ATP binding"/>
    <property type="evidence" value="ECO:0007669"/>
    <property type="project" value="UniProtKB-UniRule"/>
</dbReference>
<dbReference type="GO" id="GO:0016879">
    <property type="term" value="F:ligase activity, forming carbon-nitrogen bonds"/>
    <property type="evidence" value="ECO:0007669"/>
    <property type="project" value="UniProtKB-UniRule"/>
</dbReference>
<dbReference type="GO" id="GO:0008270">
    <property type="term" value="F:zinc ion binding"/>
    <property type="evidence" value="ECO:0007669"/>
    <property type="project" value="UniProtKB-UniRule"/>
</dbReference>
<dbReference type="GO" id="GO:0008616">
    <property type="term" value="P:queuosine biosynthetic process"/>
    <property type="evidence" value="ECO:0007669"/>
    <property type="project" value="UniProtKB-UniRule"/>
</dbReference>
<dbReference type="CDD" id="cd01995">
    <property type="entry name" value="QueC-like"/>
    <property type="match status" value="1"/>
</dbReference>
<dbReference type="FunFam" id="3.40.50.620:FF:000017">
    <property type="entry name" value="7-cyano-7-deazaguanine synthase"/>
    <property type="match status" value="1"/>
</dbReference>
<dbReference type="Gene3D" id="3.40.50.620">
    <property type="entry name" value="HUPs"/>
    <property type="match status" value="1"/>
</dbReference>
<dbReference type="HAMAP" id="MF_01633">
    <property type="entry name" value="QueC"/>
    <property type="match status" value="1"/>
</dbReference>
<dbReference type="InterPro" id="IPR018317">
    <property type="entry name" value="QueC"/>
</dbReference>
<dbReference type="InterPro" id="IPR014729">
    <property type="entry name" value="Rossmann-like_a/b/a_fold"/>
</dbReference>
<dbReference type="NCBIfam" id="TIGR00364">
    <property type="entry name" value="7-cyano-7-deazaguanine synthase QueC"/>
    <property type="match status" value="1"/>
</dbReference>
<dbReference type="PANTHER" id="PTHR42914">
    <property type="entry name" value="7-CYANO-7-DEAZAGUANINE SYNTHASE"/>
    <property type="match status" value="1"/>
</dbReference>
<dbReference type="PANTHER" id="PTHR42914:SF1">
    <property type="entry name" value="7-CYANO-7-DEAZAGUANINE SYNTHASE"/>
    <property type="match status" value="1"/>
</dbReference>
<dbReference type="Pfam" id="PF06508">
    <property type="entry name" value="QueC"/>
    <property type="match status" value="1"/>
</dbReference>
<dbReference type="PIRSF" id="PIRSF006293">
    <property type="entry name" value="ExsB"/>
    <property type="match status" value="1"/>
</dbReference>
<dbReference type="SUPFAM" id="SSF52402">
    <property type="entry name" value="Adenine nucleotide alpha hydrolases-like"/>
    <property type="match status" value="1"/>
</dbReference>
<proteinExistence type="inferred from homology"/>
<comment type="function">
    <text evidence="1">Catalyzes the ATP-dependent conversion of 7-carboxy-7-deazaguanine (CDG) to 7-cyano-7-deazaguanine (preQ(0)).</text>
</comment>
<comment type="catalytic activity">
    <reaction evidence="1">
        <text>7-carboxy-7-deazaguanine + NH4(+) + ATP = 7-cyano-7-deazaguanine + ADP + phosphate + H2O + H(+)</text>
        <dbReference type="Rhea" id="RHEA:27982"/>
        <dbReference type="ChEBI" id="CHEBI:15377"/>
        <dbReference type="ChEBI" id="CHEBI:15378"/>
        <dbReference type="ChEBI" id="CHEBI:28938"/>
        <dbReference type="ChEBI" id="CHEBI:30616"/>
        <dbReference type="ChEBI" id="CHEBI:43474"/>
        <dbReference type="ChEBI" id="CHEBI:45075"/>
        <dbReference type="ChEBI" id="CHEBI:61036"/>
        <dbReference type="ChEBI" id="CHEBI:456216"/>
        <dbReference type="EC" id="6.3.4.20"/>
    </reaction>
</comment>
<comment type="cofactor">
    <cofactor evidence="1">
        <name>Zn(2+)</name>
        <dbReference type="ChEBI" id="CHEBI:29105"/>
    </cofactor>
    <text evidence="1">Binds 1 zinc ion per subunit.</text>
</comment>
<comment type="pathway">
    <text evidence="1">Purine metabolism; 7-cyano-7-deazaguanine biosynthesis.</text>
</comment>
<comment type="subunit">
    <text evidence="1">Homodimer.</text>
</comment>
<comment type="similarity">
    <text evidence="1">Belongs to the QueC family.</text>
</comment>
<keyword id="KW-0067">ATP-binding</keyword>
<keyword id="KW-0436">Ligase</keyword>
<keyword id="KW-0479">Metal-binding</keyword>
<keyword id="KW-0547">Nucleotide-binding</keyword>
<keyword id="KW-0671">Queuosine biosynthesis</keyword>
<keyword id="KW-0862">Zinc</keyword>
<gene>
    <name evidence="1" type="primary">queC</name>
    <name type="ordered locus">SAHV_0709</name>
</gene>
<sequence>MESVLNNEKAIVVFSGGQDSTTCLFYAKKHFKEVELVTFNYGQRHDTEIEVAKQIAQDQGMKHHVLDMSLLSQLTPNALTQHDMEITNNEDGIPNTFVPARNLLFLSFAGALAYQIGAKHIITGVCETDFSGYPDCRDSFIKSMNVTLSLAMDKDFVIHTPLMWLNKAETWKLSDELEVLDYIRTKTLTCYNGIIGDGCGECPACHLRQRGLNQYLESKGAL</sequence>
<reference key="1">
    <citation type="journal article" date="2008" name="Antimicrob. Agents Chemother.">
        <title>Mutated response regulator graR is responsible for phenotypic conversion of Staphylococcus aureus from heterogeneous vancomycin-intermediate resistance to vancomycin-intermediate resistance.</title>
        <authorList>
            <person name="Neoh H.-M."/>
            <person name="Cui L."/>
            <person name="Yuzawa H."/>
            <person name="Takeuchi F."/>
            <person name="Matsuo M."/>
            <person name="Hiramatsu K."/>
        </authorList>
    </citation>
    <scope>NUCLEOTIDE SEQUENCE [LARGE SCALE GENOMIC DNA]</scope>
    <source>
        <strain>Mu3 / ATCC 700698</strain>
    </source>
</reference>
<evidence type="ECO:0000255" key="1">
    <source>
        <dbReference type="HAMAP-Rule" id="MF_01633"/>
    </source>
</evidence>
<accession>A7WZJ4</accession>
<name>QUEC_STAA1</name>
<feature type="chain" id="PRO_0000336955" description="7-cyano-7-deazaguanine synthase">
    <location>
        <begin position="1"/>
        <end position="222"/>
    </location>
</feature>
<feature type="binding site" evidence="1">
    <location>
        <begin position="14"/>
        <end position="24"/>
    </location>
    <ligand>
        <name>ATP</name>
        <dbReference type="ChEBI" id="CHEBI:30616"/>
    </ligand>
</feature>
<feature type="binding site" evidence="1">
    <location>
        <position position="190"/>
    </location>
    <ligand>
        <name>Zn(2+)</name>
        <dbReference type="ChEBI" id="CHEBI:29105"/>
    </ligand>
</feature>
<feature type="binding site" evidence="1">
    <location>
        <position position="199"/>
    </location>
    <ligand>
        <name>Zn(2+)</name>
        <dbReference type="ChEBI" id="CHEBI:29105"/>
    </ligand>
</feature>
<feature type="binding site" evidence="1">
    <location>
        <position position="202"/>
    </location>
    <ligand>
        <name>Zn(2+)</name>
        <dbReference type="ChEBI" id="CHEBI:29105"/>
    </ligand>
</feature>
<feature type="binding site" evidence="1">
    <location>
        <position position="205"/>
    </location>
    <ligand>
        <name>Zn(2+)</name>
        <dbReference type="ChEBI" id="CHEBI:29105"/>
    </ligand>
</feature>
<organism>
    <name type="scientific">Staphylococcus aureus (strain Mu3 / ATCC 700698)</name>
    <dbReference type="NCBI Taxonomy" id="418127"/>
    <lineage>
        <taxon>Bacteria</taxon>
        <taxon>Bacillati</taxon>
        <taxon>Bacillota</taxon>
        <taxon>Bacilli</taxon>
        <taxon>Bacillales</taxon>
        <taxon>Staphylococcaceae</taxon>
        <taxon>Staphylococcus</taxon>
    </lineage>
</organism>
<protein>
    <recommendedName>
        <fullName evidence="1">7-cyano-7-deazaguanine synthase</fullName>
        <ecNumber evidence="1">6.3.4.20</ecNumber>
    </recommendedName>
    <alternativeName>
        <fullName evidence="1">7-cyano-7-carbaguanine synthase</fullName>
    </alternativeName>
    <alternativeName>
        <fullName evidence="1">PreQ(0) synthase</fullName>
    </alternativeName>
    <alternativeName>
        <fullName evidence="1">Queuosine biosynthesis protein QueC</fullName>
    </alternativeName>
</protein>